<gene>
    <name type="primary">Cyp4ae1</name>
    <name type="synonym">CYP4E4</name>
    <name type="ORF">CG10755</name>
</gene>
<feature type="chain" id="PRO_0000051830" description="Cytochrome P450 4ae1">
    <location>
        <begin position="1"/>
        <end position="496"/>
    </location>
</feature>
<feature type="binding site" description="axial binding residue" evidence="1">
    <location>
        <position position="443"/>
    </location>
    <ligand>
        <name>heme</name>
        <dbReference type="ChEBI" id="CHEBI:30413"/>
    </ligand>
    <ligandPart>
        <name>Fe</name>
        <dbReference type="ChEBI" id="CHEBI:18248"/>
    </ligandPart>
</feature>
<feature type="sequence conflict" description="In Ref. 5; AAA80665." evidence="2" ref="5">
    <original>L</original>
    <variation>P</variation>
    <location>
        <position position="319"/>
    </location>
</feature>
<evidence type="ECO:0000250" key="1"/>
<evidence type="ECO:0000305" key="2"/>
<dbReference type="EC" id="1.14.-.-"/>
<dbReference type="EMBL" id="AE014298">
    <property type="protein sequence ID" value="AAF45742.1"/>
    <property type="molecule type" value="Genomic_DNA"/>
</dbReference>
<dbReference type="EMBL" id="AL009194">
    <property type="protein sequence ID" value="CAA15700.1"/>
    <property type="molecule type" value="Genomic_DNA"/>
</dbReference>
<dbReference type="EMBL" id="AY058450">
    <property type="protein sequence ID" value="AAL13679.1"/>
    <property type="molecule type" value="mRNA"/>
</dbReference>
<dbReference type="EMBL" id="U34331">
    <property type="protein sequence ID" value="AAA80665.1"/>
    <property type="molecule type" value="mRNA"/>
</dbReference>
<dbReference type="RefSeq" id="NP_525044.1">
    <property type="nucleotide sequence ID" value="NM_080305.4"/>
</dbReference>
<dbReference type="SMR" id="O46054"/>
<dbReference type="BioGRID" id="57733">
    <property type="interactions" value="7"/>
</dbReference>
<dbReference type="FunCoup" id="O46054">
    <property type="interactions" value="25"/>
</dbReference>
<dbReference type="IntAct" id="O46054">
    <property type="interactions" value="4"/>
</dbReference>
<dbReference type="STRING" id="7227.FBpp0070372"/>
<dbReference type="PaxDb" id="7227-FBpp0070372"/>
<dbReference type="EnsemblMetazoa" id="FBtr0070388">
    <property type="protein sequence ID" value="FBpp0070372"/>
    <property type="gene ID" value="FBgn0015036"/>
</dbReference>
<dbReference type="GeneID" id="31193"/>
<dbReference type="KEGG" id="dme:Dmel_CG10755"/>
<dbReference type="AGR" id="FB:FBgn0015036"/>
<dbReference type="CTD" id="31193"/>
<dbReference type="FlyBase" id="FBgn0015036">
    <property type="gene designation" value="Cyp4ae1"/>
</dbReference>
<dbReference type="VEuPathDB" id="VectorBase:FBgn0015036"/>
<dbReference type="eggNOG" id="KOG0157">
    <property type="taxonomic scope" value="Eukaryota"/>
</dbReference>
<dbReference type="GeneTree" id="ENSGT00940000165700"/>
<dbReference type="HOGENOM" id="CLU_001570_5_1_1"/>
<dbReference type="InParanoid" id="O46054"/>
<dbReference type="OMA" id="YLQHFIN"/>
<dbReference type="OrthoDB" id="1470350at2759"/>
<dbReference type="PhylomeDB" id="O46054"/>
<dbReference type="Reactome" id="R-DME-193144">
    <property type="pathway name" value="Estrogen biosynthesis"/>
</dbReference>
<dbReference type="Reactome" id="R-DME-211976">
    <property type="pathway name" value="Endogenous sterols"/>
</dbReference>
<dbReference type="BioGRID-ORCS" id="31193">
    <property type="hits" value="0 hits in 3 CRISPR screens"/>
</dbReference>
<dbReference type="GenomeRNAi" id="31193"/>
<dbReference type="PRO" id="PR:O46054"/>
<dbReference type="Proteomes" id="UP000000803">
    <property type="component" value="Chromosome X"/>
</dbReference>
<dbReference type="Bgee" id="FBgn0015036">
    <property type="expression patterns" value="Expressed in enterocyte of anterior adult midgut epithelium in digestive tract and 19 other cell types or tissues"/>
</dbReference>
<dbReference type="GO" id="GO:0005789">
    <property type="term" value="C:endoplasmic reticulum membrane"/>
    <property type="evidence" value="ECO:0007669"/>
    <property type="project" value="UniProtKB-SubCell"/>
</dbReference>
<dbReference type="GO" id="GO:0020037">
    <property type="term" value="F:heme binding"/>
    <property type="evidence" value="ECO:0007669"/>
    <property type="project" value="InterPro"/>
</dbReference>
<dbReference type="GO" id="GO:0005506">
    <property type="term" value="F:iron ion binding"/>
    <property type="evidence" value="ECO:0007669"/>
    <property type="project" value="InterPro"/>
</dbReference>
<dbReference type="GO" id="GO:0004497">
    <property type="term" value="F:monooxygenase activity"/>
    <property type="evidence" value="ECO:0007669"/>
    <property type="project" value="UniProtKB-KW"/>
</dbReference>
<dbReference type="GO" id="GO:0016705">
    <property type="term" value="F:oxidoreductase activity, acting on paired donors, with incorporation or reduction of molecular oxygen"/>
    <property type="evidence" value="ECO:0007669"/>
    <property type="project" value="InterPro"/>
</dbReference>
<dbReference type="CDD" id="cd20628">
    <property type="entry name" value="CYP4"/>
    <property type="match status" value="1"/>
</dbReference>
<dbReference type="Gene3D" id="1.10.630.10">
    <property type="entry name" value="Cytochrome P450"/>
    <property type="match status" value="1"/>
</dbReference>
<dbReference type="InterPro" id="IPR001128">
    <property type="entry name" value="Cyt_P450"/>
</dbReference>
<dbReference type="InterPro" id="IPR017972">
    <property type="entry name" value="Cyt_P450_CS"/>
</dbReference>
<dbReference type="InterPro" id="IPR002401">
    <property type="entry name" value="Cyt_P450_E_grp-I"/>
</dbReference>
<dbReference type="InterPro" id="IPR036396">
    <property type="entry name" value="Cyt_P450_sf"/>
</dbReference>
<dbReference type="InterPro" id="IPR050196">
    <property type="entry name" value="Cytochrome_P450_Monoox"/>
</dbReference>
<dbReference type="PANTHER" id="PTHR24291:SF187">
    <property type="entry name" value="CYTOCHROME P450 4AE1-RELATED"/>
    <property type="match status" value="1"/>
</dbReference>
<dbReference type="PANTHER" id="PTHR24291">
    <property type="entry name" value="CYTOCHROME P450 FAMILY 4"/>
    <property type="match status" value="1"/>
</dbReference>
<dbReference type="Pfam" id="PF00067">
    <property type="entry name" value="p450"/>
    <property type="match status" value="1"/>
</dbReference>
<dbReference type="PRINTS" id="PR00463">
    <property type="entry name" value="EP450I"/>
</dbReference>
<dbReference type="PRINTS" id="PR00385">
    <property type="entry name" value="P450"/>
</dbReference>
<dbReference type="SUPFAM" id="SSF48264">
    <property type="entry name" value="Cytochrome P450"/>
    <property type="match status" value="1"/>
</dbReference>
<dbReference type="PROSITE" id="PS00086">
    <property type="entry name" value="CYTOCHROME_P450"/>
    <property type="match status" value="1"/>
</dbReference>
<reference key="1">
    <citation type="journal article" date="2000" name="Science">
        <title>The genome sequence of Drosophila melanogaster.</title>
        <authorList>
            <person name="Adams M.D."/>
            <person name="Celniker S.E."/>
            <person name="Holt R.A."/>
            <person name="Evans C.A."/>
            <person name="Gocayne J.D."/>
            <person name="Amanatides P.G."/>
            <person name="Scherer S.E."/>
            <person name="Li P.W."/>
            <person name="Hoskins R.A."/>
            <person name="Galle R.F."/>
            <person name="George R.A."/>
            <person name="Lewis S.E."/>
            <person name="Richards S."/>
            <person name="Ashburner M."/>
            <person name="Henderson S.N."/>
            <person name="Sutton G.G."/>
            <person name="Wortman J.R."/>
            <person name="Yandell M.D."/>
            <person name="Zhang Q."/>
            <person name="Chen L.X."/>
            <person name="Brandon R.C."/>
            <person name="Rogers Y.-H.C."/>
            <person name="Blazej R.G."/>
            <person name="Champe M."/>
            <person name="Pfeiffer B.D."/>
            <person name="Wan K.H."/>
            <person name="Doyle C."/>
            <person name="Baxter E.G."/>
            <person name="Helt G."/>
            <person name="Nelson C.R."/>
            <person name="Miklos G.L.G."/>
            <person name="Abril J.F."/>
            <person name="Agbayani A."/>
            <person name="An H.-J."/>
            <person name="Andrews-Pfannkoch C."/>
            <person name="Baldwin D."/>
            <person name="Ballew R.M."/>
            <person name="Basu A."/>
            <person name="Baxendale J."/>
            <person name="Bayraktaroglu L."/>
            <person name="Beasley E.M."/>
            <person name="Beeson K.Y."/>
            <person name="Benos P.V."/>
            <person name="Berman B.P."/>
            <person name="Bhandari D."/>
            <person name="Bolshakov S."/>
            <person name="Borkova D."/>
            <person name="Botchan M.R."/>
            <person name="Bouck J."/>
            <person name="Brokstein P."/>
            <person name="Brottier P."/>
            <person name="Burtis K.C."/>
            <person name="Busam D.A."/>
            <person name="Butler H."/>
            <person name="Cadieu E."/>
            <person name="Center A."/>
            <person name="Chandra I."/>
            <person name="Cherry J.M."/>
            <person name="Cawley S."/>
            <person name="Dahlke C."/>
            <person name="Davenport L.B."/>
            <person name="Davies P."/>
            <person name="de Pablos B."/>
            <person name="Delcher A."/>
            <person name="Deng Z."/>
            <person name="Mays A.D."/>
            <person name="Dew I."/>
            <person name="Dietz S.M."/>
            <person name="Dodson K."/>
            <person name="Doup L.E."/>
            <person name="Downes M."/>
            <person name="Dugan-Rocha S."/>
            <person name="Dunkov B.C."/>
            <person name="Dunn P."/>
            <person name="Durbin K.J."/>
            <person name="Evangelista C.C."/>
            <person name="Ferraz C."/>
            <person name="Ferriera S."/>
            <person name="Fleischmann W."/>
            <person name="Fosler C."/>
            <person name="Gabrielian A.E."/>
            <person name="Garg N.S."/>
            <person name="Gelbart W.M."/>
            <person name="Glasser K."/>
            <person name="Glodek A."/>
            <person name="Gong F."/>
            <person name="Gorrell J.H."/>
            <person name="Gu Z."/>
            <person name="Guan P."/>
            <person name="Harris M."/>
            <person name="Harris N.L."/>
            <person name="Harvey D.A."/>
            <person name="Heiman T.J."/>
            <person name="Hernandez J.R."/>
            <person name="Houck J."/>
            <person name="Hostin D."/>
            <person name="Houston K.A."/>
            <person name="Howland T.J."/>
            <person name="Wei M.-H."/>
            <person name="Ibegwam C."/>
            <person name="Jalali M."/>
            <person name="Kalush F."/>
            <person name="Karpen G.H."/>
            <person name="Ke Z."/>
            <person name="Kennison J.A."/>
            <person name="Ketchum K.A."/>
            <person name="Kimmel B.E."/>
            <person name="Kodira C.D."/>
            <person name="Kraft C.L."/>
            <person name="Kravitz S."/>
            <person name="Kulp D."/>
            <person name="Lai Z."/>
            <person name="Lasko P."/>
            <person name="Lei Y."/>
            <person name="Levitsky A.A."/>
            <person name="Li J.H."/>
            <person name="Li Z."/>
            <person name="Liang Y."/>
            <person name="Lin X."/>
            <person name="Liu X."/>
            <person name="Mattei B."/>
            <person name="McIntosh T.C."/>
            <person name="McLeod M.P."/>
            <person name="McPherson D."/>
            <person name="Merkulov G."/>
            <person name="Milshina N.V."/>
            <person name="Mobarry C."/>
            <person name="Morris J."/>
            <person name="Moshrefi A."/>
            <person name="Mount S.M."/>
            <person name="Moy M."/>
            <person name="Murphy B."/>
            <person name="Murphy L."/>
            <person name="Muzny D.M."/>
            <person name="Nelson D.L."/>
            <person name="Nelson D.R."/>
            <person name="Nelson K.A."/>
            <person name="Nixon K."/>
            <person name="Nusskern D.R."/>
            <person name="Pacleb J.M."/>
            <person name="Palazzolo M."/>
            <person name="Pittman G.S."/>
            <person name="Pan S."/>
            <person name="Pollard J."/>
            <person name="Puri V."/>
            <person name="Reese M.G."/>
            <person name="Reinert K."/>
            <person name="Remington K."/>
            <person name="Saunders R.D.C."/>
            <person name="Scheeler F."/>
            <person name="Shen H."/>
            <person name="Shue B.C."/>
            <person name="Siden-Kiamos I."/>
            <person name="Simpson M."/>
            <person name="Skupski M.P."/>
            <person name="Smith T.J."/>
            <person name="Spier E."/>
            <person name="Spradling A.C."/>
            <person name="Stapleton M."/>
            <person name="Strong R."/>
            <person name="Sun E."/>
            <person name="Svirskas R."/>
            <person name="Tector C."/>
            <person name="Turner R."/>
            <person name="Venter E."/>
            <person name="Wang A.H."/>
            <person name="Wang X."/>
            <person name="Wang Z.-Y."/>
            <person name="Wassarman D.A."/>
            <person name="Weinstock G.M."/>
            <person name="Weissenbach J."/>
            <person name="Williams S.M."/>
            <person name="Woodage T."/>
            <person name="Worley K.C."/>
            <person name="Wu D."/>
            <person name="Yang S."/>
            <person name="Yao Q.A."/>
            <person name="Ye J."/>
            <person name="Yeh R.-F."/>
            <person name="Zaveri J.S."/>
            <person name="Zhan M."/>
            <person name="Zhang G."/>
            <person name="Zhao Q."/>
            <person name="Zheng L."/>
            <person name="Zheng X.H."/>
            <person name="Zhong F.N."/>
            <person name="Zhong W."/>
            <person name="Zhou X."/>
            <person name="Zhu S.C."/>
            <person name="Zhu X."/>
            <person name="Smith H.O."/>
            <person name="Gibbs R.A."/>
            <person name="Myers E.W."/>
            <person name="Rubin G.M."/>
            <person name="Venter J.C."/>
        </authorList>
    </citation>
    <scope>NUCLEOTIDE SEQUENCE [LARGE SCALE GENOMIC DNA]</scope>
    <source>
        <strain>Berkeley</strain>
    </source>
</reference>
<reference key="2">
    <citation type="journal article" date="2002" name="Genome Biol.">
        <title>Annotation of the Drosophila melanogaster euchromatic genome: a systematic review.</title>
        <authorList>
            <person name="Misra S."/>
            <person name="Crosby M.A."/>
            <person name="Mungall C.J."/>
            <person name="Matthews B.B."/>
            <person name="Campbell K.S."/>
            <person name="Hradecky P."/>
            <person name="Huang Y."/>
            <person name="Kaminker J.S."/>
            <person name="Millburn G.H."/>
            <person name="Prochnik S.E."/>
            <person name="Smith C.D."/>
            <person name="Tupy J.L."/>
            <person name="Whitfield E.J."/>
            <person name="Bayraktaroglu L."/>
            <person name="Berman B.P."/>
            <person name="Bettencourt B.R."/>
            <person name="Celniker S.E."/>
            <person name="de Grey A.D.N.J."/>
            <person name="Drysdale R.A."/>
            <person name="Harris N.L."/>
            <person name="Richter J."/>
            <person name="Russo S."/>
            <person name="Schroeder A.J."/>
            <person name="Shu S.Q."/>
            <person name="Stapleton M."/>
            <person name="Yamada C."/>
            <person name="Ashburner M."/>
            <person name="Gelbart W.M."/>
            <person name="Rubin G.M."/>
            <person name="Lewis S.E."/>
        </authorList>
    </citation>
    <scope>GENOME REANNOTATION</scope>
    <source>
        <strain>Berkeley</strain>
    </source>
</reference>
<reference key="3">
    <citation type="journal article" date="2000" name="Science">
        <title>From sequence to chromosome: the tip of the X chromosome of D. melanogaster.</title>
        <authorList>
            <person name="Benos P.V."/>
            <person name="Gatt M.K."/>
            <person name="Ashburner M."/>
            <person name="Murphy L."/>
            <person name="Harris D."/>
            <person name="Barrell B.G."/>
            <person name="Ferraz C."/>
            <person name="Vidal S."/>
            <person name="Brun C."/>
            <person name="Demailles J."/>
            <person name="Cadieu E."/>
            <person name="Dreano S."/>
            <person name="Gloux S."/>
            <person name="Lelaure V."/>
            <person name="Mottier S."/>
            <person name="Galibert F."/>
            <person name="Borkova D."/>
            <person name="Minana B."/>
            <person name="Kafatos F.C."/>
            <person name="Louis C."/>
            <person name="Siden-Kiamos I."/>
            <person name="Bolshakov S."/>
            <person name="Papagiannakis G."/>
            <person name="Spanos L."/>
            <person name="Cox S."/>
            <person name="Madueno E."/>
            <person name="de Pablos B."/>
            <person name="Modolell J."/>
            <person name="Peter A."/>
            <person name="Schoettler P."/>
            <person name="Werner M."/>
            <person name="Mourkioti F."/>
            <person name="Beinert N."/>
            <person name="Dowe G."/>
            <person name="Schaefer U."/>
            <person name="Jaeckle H."/>
            <person name="Bucheton A."/>
            <person name="Callister D.M."/>
            <person name="Campbell L.A."/>
            <person name="Darlamitsou A."/>
            <person name="Henderson N.S."/>
            <person name="McMillan P.J."/>
            <person name="Salles C."/>
            <person name="Tait E.A."/>
            <person name="Valenti P."/>
            <person name="Saunders R.D.C."/>
            <person name="Glover D.M."/>
        </authorList>
    </citation>
    <scope>NUCLEOTIDE SEQUENCE [LARGE SCALE GENOMIC DNA]</scope>
    <source>
        <strain>Oregon-R</strain>
    </source>
</reference>
<reference key="4">
    <citation type="journal article" date="2002" name="Genome Biol.">
        <title>A Drosophila full-length cDNA resource.</title>
        <authorList>
            <person name="Stapleton M."/>
            <person name="Carlson J.W."/>
            <person name="Brokstein P."/>
            <person name="Yu C."/>
            <person name="Champe M."/>
            <person name="George R.A."/>
            <person name="Guarin H."/>
            <person name="Kronmiller B."/>
            <person name="Pacleb J.M."/>
            <person name="Park S."/>
            <person name="Wan K.H."/>
            <person name="Rubin G.M."/>
            <person name="Celniker S.E."/>
        </authorList>
    </citation>
    <scope>NUCLEOTIDE SEQUENCE [LARGE SCALE MRNA]</scope>
    <source>
        <strain>Berkeley</strain>
        <tissue>Head</tissue>
    </source>
</reference>
<reference key="5">
    <citation type="journal article" date="1996" name="Mol. Gen. Genet.">
        <title>Cytochrome P450 gene clusters in Drosophila melanogaster.</title>
        <authorList>
            <person name="Dunkov B.C."/>
            <person name="Rodriguez-Arnaiz R."/>
            <person name="Pittendrigh B."/>
            <person name="ffrench-Constant R.H."/>
            <person name="Feyereisen R."/>
        </authorList>
    </citation>
    <scope>NUCLEOTIDE SEQUENCE [MRNA] OF 309-434</scope>
    <source>
        <strain>Haag-79</strain>
    </source>
</reference>
<sequence length="496" mass="56275">MLVVLLVALLVTRLVASLFRLALKELRHPLQGVVPSVSRVPLLGAAWQMRSFQPDNLHDKFAEYVKRFGRSFMGTVLGHVVMVTAEPRHIDALLQGQHQLKKGTMYFALRGWLGDGLLLSRGKEWHTMRKIITPTFHFSILEQFVEVFDRQSSILVERLRTLSYGNEVVNIYPLVGLAALDIITETAMGVNVDAQGADSEVVHAVKDLTNILATRFMRPHLLFPHLFRLCWPSGFRKQQAGVICLHEFTNGIIEQRRRLLAREANQDKPTKPHALLDTLLRATVDGQPLTDKQIRDEVNTFIFEGHDTTTSAVSFCLYLLSRHEAVQQKLFEELRMHYGQDLFRGVILSDFATLPYLSCVVKESLRLYPPIPAVARCLEKDLVIDEGYIPVGTNVVVLLWQLLRDEAIFTDPLVFQPERHLGEEAPRLSPYSYIPFSAGPRNCIGQKFALLEMKTMVTKVIRHYQLLPMGADVEPSIKIVLRSKSGVNVGLRPRLY</sequence>
<protein>
    <recommendedName>
        <fullName>Cytochrome P450 4ae1</fullName>
        <ecNumber>1.14.-.-</ecNumber>
    </recommendedName>
    <alternativeName>
        <fullName>CYPIVAE1</fullName>
    </alternativeName>
</protein>
<name>C4AE1_DROME</name>
<proteinExistence type="evidence at transcript level"/>
<comment type="function">
    <text evidence="1">May be involved in the metabolism of insect hormones and in the breakdown of synthetic insecticides.</text>
</comment>
<comment type="cofactor">
    <cofactor evidence="1">
        <name>heme</name>
        <dbReference type="ChEBI" id="CHEBI:30413"/>
    </cofactor>
</comment>
<comment type="subcellular location">
    <subcellularLocation>
        <location evidence="2">Endoplasmic reticulum membrane</location>
        <topology evidence="2">Peripheral membrane protein</topology>
    </subcellularLocation>
    <subcellularLocation>
        <location evidence="2">Microsome membrane</location>
        <topology evidence="2">Peripheral membrane protein</topology>
    </subcellularLocation>
</comment>
<comment type="similarity">
    <text evidence="2">Belongs to the cytochrome P450 family.</text>
</comment>
<keyword id="KW-0256">Endoplasmic reticulum</keyword>
<keyword id="KW-0349">Heme</keyword>
<keyword id="KW-0408">Iron</keyword>
<keyword id="KW-0472">Membrane</keyword>
<keyword id="KW-0479">Metal-binding</keyword>
<keyword id="KW-0492">Microsome</keyword>
<keyword id="KW-0503">Monooxygenase</keyword>
<keyword id="KW-0560">Oxidoreductase</keyword>
<keyword id="KW-1185">Reference proteome</keyword>
<organism>
    <name type="scientific">Drosophila melanogaster</name>
    <name type="common">Fruit fly</name>
    <dbReference type="NCBI Taxonomy" id="7227"/>
    <lineage>
        <taxon>Eukaryota</taxon>
        <taxon>Metazoa</taxon>
        <taxon>Ecdysozoa</taxon>
        <taxon>Arthropoda</taxon>
        <taxon>Hexapoda</taxon>
        <taxon>Insecta</taxon>
        <taxon>Pterygota</taxon>
        <taxon>Neoptera</taxon>
        <taxon>Endopterygota</taxon>
        <taxon>Diptera</taxon>
        <taxon>Brachycera</taxon>
        <taxon>Muscomorpha</taxon>
        <taxon>Ephydroidea</taxon>
        <taxon>Drosophilidae</taxon>
        <taxon>Drosophila</taxon>
        <taxon>Sophophora</taxon>
    </lineage>
</organism>
<accession>O46054</accession>
<accession>Q24129</accession>